<proteinExistence type="inferred from homology"/>
<name>HIS8_CLOB8</name>
<organism>
    <name type="scientific">Clostridium beijerinckii (strain ATCC 51743 / NCIMB 8052)</name>
    <name type="common">Clostridium acetobutylicum</name>
    <dbReference type="NCBI Taxonomy" id="290402"/>
    <lineage>
        <taxon>Bacteria</taxon>
        <taxon>Bacillati</taxon>
        <taxon>Bacillota</taxon>
        <taxon>Clostridia</taxon>
        <taxon>Eubacteriales</taxon>
        <taxon>Clostridiaceae</taxon>
        <taxon>Clostridium</taxon>
    </lineage>
</organism>
<keyword id="KW-0028">Amino-acid biosynthesis</keyword>
<keyword id="KW-0032">Aminotransferase</keyword>
<keyword id="KW-0368">Histidine biosynthesis</keyword>
<keyword id="KW-0663">Pyridoxal phosphate</keyword>
<keyword id="KW-0808">Transferase</keyword>
<dbReference type="EC" id="2.6.1.9" evidence="1"/>
<dbReference type="EMBL" id="CP000721">
    <property type="protein sequence ID" value="ABR33983.1"/>
    <property type="molecule type" value="Genomic_DNA"/>
</dbReference>
<dbReference type="RefSeq" id="WP_011969135.1">
    <property type="nucleotide sequence ID" value="NC_009617.1"/>
</dbReference>
<dbReference type="SMR" id="A6LUF3"/>
<dbReference type="KEGG" id="cbe:Cbei_1812"/>
<dbReference type="eggNOG" id="COG0079">
    <property type="taxonomic scope" value="Bacteria"/>
</dbReference>
<dbReference type="HOGENOM" id="CLU_017584_3_0_9"/>
<dbReference type="UniPathway" id="UPA00031">
    <property type="reaction ID" value="UER00012"/>
</dbReference>
<dbReference type="Proteomes" id="UP000000565">
    <property type="component" value="Chromosome"/>
</dbReference>
<dbReference type="GO" id="GO:0004400">
    <property type="term" value="F:histidinol-phosphate transaminase activity"/>
    <property type="evidence" value="ECO:0007669"/>
    <property type="project" value="UniProtKB-UniRule"/>
</dbReference>
<dbReference type="GO" id="GO:0030170">
    <property type="term" value="F:pyridoxal phosphate binding"/>
    <property type="evidence" value="ECO:0007669"/>
    <property type="project" value="InterPro"/>
</dbReference>
<dbReference type="GO" id="GO:0000105">
    <property type="term" value="P:L-histidine biosynthetic process"/>
    <property type="evidence" value="ECO:0007669"/>
    <property type="project" value="UniProtKB-UniRule"/>
</dbReference>
<dbReference type="CDD" id="cd00609">
    <property type="entry name" value="AAT_like"/>
    <property type="match status" value="1"/>
</dbReference>
<dbReference type="Gene3D" id="3.90.1150.10">
    <property type="entry name" value="Aspartate Aminotransferase, domain 1"/>
    <property type="match status" value="1"/>
</dbReference>
<dbReference type="Gene3D" id="3.40.640.10">
    <property type="entry name" value="Type I PLP-dependent aspartate aminotransferase-like (Major domain)"/>
    <property type="match status" value="1"/>
</dbReference>
<dbReference type="HAMAP" id="MF_01023">
    <property type="entry name" value="HisC_aminotrans_2"/>
    <property type="match status" value="1"/>
</dbReference>
<dbReference type="InterPro" id="IPR001917">
    <property type="entry name" value="Aminotrans_II_pyridoxalP_BS"/>
</dbReference>
<dbReference type="InterPro" id="IPR004839">
    <property type="entry name" value="Aminotransferase_I/II_large"/>
</dbReference>
<dbReference type="InterPro" id="IPR005861">
    <property type="entry name" value="HisP_aminotrans"/>
</dbReference>
<dbReference type="InterPro" id="IPR015424">
    <property type="entry name" value="PyrdxlP-dep_Trfase"/>
</dbReference>
<dbReference type="InterPro" id="IPR015421">
    <property type="entry name" value="PyrdxlP-dep_Trfase_major"/>
</dbReference>
<dbReference type="InterPro" id="IPR015422">
    <property type="entry name" value="PyrdxlP-dep_Trfase_small"/>
</dbReference>
<dbReference type="NCBIfam" id="TIGR01141">
    <property type="entry name" value="hisC"/>
    <property type="match status" value="1"/>
</dbReference>
<dbReference type="PANTHER" id="PTHR42885:SF2">
    <property type="entry name" value="HISTIDINOL-PHOSPHATE AMINOTRANSFERASE"/>
    <property type="match status" value="1"/>
</dbReference>
<dbReference type="PANTHER" id="PTHR42885">
    <property type="entry name" value="HISTIDINOL-PHOSPHATE AMINOTRANSFERASE-RELATED"/>
    <property type="match status" value="1"/>
</dbReference>
<dbReference type="Pfam" id="PF00155">
    <property type="entry name" value="Aminotran_1_2"/>
    <property type="match status" value="1"/>
</dbReference>
<dbReference type="SUPFAM" id="SSF53383">
    <property type="entry name" value="PLP-dependent transferases"/>
    <property type="match status" value="1"/>
</dbReference>
<dbReference type="PROSITE" id="PS00599">
    <property type="entry name" value="AA_TRANSFER_CLASS_2"/>
    <property type="match status" value="1"/>
</dbReference>
<feature type="chain" id="PRO_1000084188" description="Histidinol-phosphate aminotransferase">
    <location>
        <begin position="1"/>
        <end position="358"/>
    </location>
</feature>
<feature type="modified residue" description="N6-(pyridoxal phosphate)lysine" evidence="1">
    <location>
        <position position="210"/>
    </location>
</feature>
<accession>A6LUF3</accession>
<gene>
    <name evidence="1" type="primary">hisC</name>
    <name type="ordered locus">Cbei_1812</name>
</gene>
<sequence>MSKYWNDKVREIEPYVPGEQPKDRKYIKLNTNENPYPPSDKVLEAMRNAVNGDLKLYPDPTCSELTSEIANYYKLDENEIFIGNGSDEILAFSFMTFFSKNKKILFPDISYTFYKVYAELFDLNYELVKLDDNFDIPLEELKKTNGGVIIPNPNAPTGKYINTESLKSLIEANKDRVVIIDEAYIDFGGQSMVKYMHEYDNLLVIQTLSKSRSLAGLRVGFALGHKDLIEGLNRIKNSINSYTIDRVALAGAKAAIQDSKYFEEITKKIVKTREKVVKELEKLDFRVLKSESNFVFASHNNASGKFIYENLKCQGILVRYFDKERIDNFLRITIGTNEEMDILIEKLRFILSNNQKEL</sequence>
<protein>
    <recommendedName>
        <fullName evidence="1">Histidinol-phosphate aminotransferase</fullName>
        <ecNumber evidence="1">2.6.1.9</ecNumber>
    </recommendedName>
    <alternativeName>
        <fullName evidence="1">Imidazole acetol-phosphate transaminase</fullName>
    </alternativeName>
</protein>
<comment type="catalytic activity">
    <reaction evidence="1">
        <text>L-histidinol phosphate + 2-oxoglutarate = 3-(imidazol-4-yl)-2-oxopropyl phosphate + L-glutamate</text>
        <dbReference type="Rhea" id="RHEA:23744"/>
        <dbReference type="ChEBI" id="CHEBI:16810"/>
        <dbReference type="ChEBI" id="CHEBI:29985"/>
        <dbReference type="ChEBI" id="CHEBI:57766"/>
        <dbReference type="ChEBI" id="CHEBI:57980"/>
        <dbReference type="EC" id="2.6.1.9"/>
    </reaction>
</comment>
<comment type="cofactor">
    <cofactor evidence="1">
        <name>pyridoxal 5'-phosphate</name>
        <dbReference type="ChEBI" id="CHEBI:597326"/>
    </cofactor>
</comment>
<comment type="pathway">
    <text evidence="1">Amino-acid biosynthesis; L-histidine biosynthesis; L-histidine from 5-phospho-alpha-D-ribose 1-diphosphate: step 7/9.</text>
</comment>
<comment type="subunit">
    <text evidence="1">Homodimer.</text>
</comment>
<comment type="similarity">
    <text evidence="1">Belongs to the class-II pyridoxal-phosphate-dependent aminotransferase family. Histidinol-phosphate aminotransferase subfamily.</text>
</comment>
<evidence type="ECO:0000255" key="1">
    <source>
        <dbReference type="HAMAP-Rule" id="MF_01023"/>
    </source>
</evidence>
<reference key="1">
    <citation type="submission" date="2007-06" db="EMBL/GenBank/DDBJ databases">
        <title>Complete sequence of Clostridium beijerinckii NCIMB 8052.</title>
        <authorList>
            <consortium name="US DOE Joint Genome Institute"/>
            <person name="Copeland A."/>
            <person name="Lucas S."/>
            <person name="Lapidus A."/>
            <person name="Barry K."/>
            <person name="Detter J.C."/>
            <person name="Glavina del Rio T."/>
            <person name="Hammon N."/>
            <person name="Israni S."/>
            <person name="Dalin E."/>
            <person name="Tice H."/>
            <person name="Pitluck S."/>
            <person name="Sims D."/>
            <person name="Brettin T."/>
            <person name="Bruce D."/>
            <person name="Tapia R."/>
            <person name="Brainard J."/>
            <person name="Schmutz J."/>
            <person name="Larimer F."/>
            <person name="Land M."/>
            <person name="Hauser L."/>
            <person name="Kyrpides N."/>
            <person name="Mikhailova N."/>
            <person name="Bennet G."/>
            <person name="Cann I."/>
            <person name="Chen J.-S."/>
            <person name="Contreras A.L."/>
            <person name="Jones D."/>
            <person name="Kashket E."/>
            <person name="Mitchell W."/>
            <person name="Stoddard S."/>
            <person name="Schwarz W."/>
            <person name="Qureshi N."/>
            <person name="Young M."/>
            <person name="Shi Z."/>
            <person name="Ezeji T."/>
            <person name="White B."/>
            <person name="Blaschek H."/>
            <person name="Richardson P."/>
        </authorList>
    </citation>
    <scope>NUCLEOTIDE SEQUENCE [LARGE SCALE GENOMIC DNA]</scope>
    <source>
        <strain>ATCC 51743 / NCIMB 8052</strain>
    </source>
</reference>